<sequence length="107" mass="11627">EIVLTQSPAITAASLGQKVTITCSASSSVSYMHWYQQKSGTSPKPWIYEISKLASGVPARFSGSGSGTSYSLTISSMEAEDAAIYYCQQWNYPLWTFGGGTKLEIKR</sequence>
<organism>
    <name type="scientific">Mus musculus</name>
    <name type="common">Mouse</name>
    <dbReference type="NCBI Taxonomy" id="10090"/>
    <lineage>
        <taxon>Eukaryota</taxon>
        <taxon>Metazoa</taxon>
        <taxon>Chordata</taxon>
        <taxon>Craniata</taxon>
        <taxon>Vertebrata</taxon>
        <taxon>Euteleostomi</taxon>
        <taxon>Mammalia</taxon>
        <taxon>Eutheria</taxon>
        <taxon>Euarchontoglires</taxon>
        <taxon>Glires</taxon>
        <taxon>Rodentia</taxon>
        <taxon>Myomorpha</taxon>
        <taxon>Muroidea</taxon>
        <taxon>Muridae</taxon>
        <taxon>Murinae</taxon>
        <taxon>Mus</taxon>
        <taxon>Mus</taxon>
    </lineage>
</organism>
<proteinExistence type="evidence at protein level"/>
<feature type="chain" id="PRO_0000059810" description="Ig kappa chain V-VI region XRPC 44">
    <location>
        <begin position="1"/>
        <end position="107" status="greater than"/>
    </location>
</feature>
<feature type="region of interest" description="Framework-1">
    <location>
        <begin position="1"/>
        <end position="23"/>
    </location>
</feature>
<feature type="region of interest" description="Complementarity-determining-1">
    <location>
        <begin position="24"/>
        <end position="33"/>
    </location>
</feature>
<feature type="region of interest" description="Framework-2">
    <location>
        <begin position="34"/>
        <end position="48"/>
    </location>
</feature>
<feature type="region of interest" description="Complementarity-determining-2">
    <location>
        <begin position="49"/>
        <end position="55"/>
    </location>
</feature>
<feature type="region of interest" description="Framework-3">
    <location>
        <begin position="56"/>
        <end position="87"/>
    </location>
</feature>
<feature type="region of interest" description="Complementarity-determining-3">
    <location>
        <begin position="88"/>
        <end position="96"/>
    </location>
</feature>
<feature type="region of interest" description="Framework-4">
    <location>
        <begin position="97"/>
        <end position="106"/>
    </location>
</feature>
<feature type="disulfide bond" evidence="1">
    <location>
        <begin position="23"/>
        <end position="87"/>
    </location>
</feature>
<feature type="sequence conflict" description="In Ref. 2; AA sequence." evidence="2" ref="2">
    <original>W</original>
    <variation>I</variation>
    <location>
        <position position="95"/>
    </location>
</feature>
<feature type="non-terminal residue">
    <location>
        <position position="107"/>
    </location>
</feature>
<evidence type="ECO:0000255" key="1">
    <source>
        <dbReference type="PROSITE-ProRule" id="PRU00114"/>
    </source>
</evidence>
<evidence type="ECO:0000305" key="2"/>
<protein>
    <recommendedName>
        <fullName>Ig kappa chain V-VI region XRPC 44</fullName>
    </recommendedName>
</protein>
<keyword id="KW-0002">3D-structure</keyword>
<keyword id="KW-1064">Adaptive immunity</keyword>
<keyword id="KW-0903">Direct protein sequencing</keyword>
<keyword id="KW-1015">Disulfide bond</keyword>
<keyword id="KW-0391">Immunity</keyword>
<keyword id="KW-1280">Immunoglobulin</keyword>
<keyword id="KW-1185">Reference proteome</keyword>
<accession>P01675</accession>
<dbReference type="PIR" id="A90420">
    <property type="entry name" value="KVMSX4"/>
</dbReference>
<dbReference type="PDB" id="3BT2">
    <property type="method" value="X-ray"/>
    <property type="resolution" value="2.50 A"/>
    <property type="chains" value="L=1-107"/>
</dbReference>
<dbReference type="PDBsum" id="3BT2"/>
<dbReference type="SMR" id="P01675"/>
<dbReference type="FunCoup" id="P01675">
    <property type="interactions" value="607"/>
</dbReference>
<dbReference type="PeptideAtlas" id="P01675"/>
<dbReference type="InParanoid" id="P01675"/>
<dbReference type="Proteomes" id="UP000000589">
    <property type="component" value="Unplaced"/>
</dbReference>
<dbReference type="RNAct" id="P01675">
    <property type="molecule type" value="protein"/>
</dbReference>
<dbReference type="GO" id="GO:0019814">
    <property type="term" value="C:immunoglobulin complex"/>
    <property type="evidence" value="ECO:0000318"/>
    <property type="project" value="GO_Central"/>
</dbReference>
<dbReference type="GO" id="GO:0002250">
    <property type="term" value="P:adaptive immune response"/>
    <property type="evidence" value="ECO:0007669"/>
    <property type="project" value="UniProtKB-KW"/>
</dbReference>
<dbReference type="GO" id="GO:0006955">
    <property type="term" value="P:immune response"/>
    <property type="evidence" value="ECO:0000318"/>
    <property type="project" value="GO_Central"/>
</dbReference>
<dbReference type="FunFam" id="2.60.40.10:FF:001317">
    <property type="entry name" value="Immunoglobulin kappa chain variable 4-54"/>
    <property type="match status" value="1"/>
</dbReference>
<dbReference type="Gene3D" id="2.60.40.10">
    <property type="entry name" value="Immunoglobulins"/>
    <property type="match status" value="1"/>
</dbReference>
<dbReference type="InterPro" id="IPR007110">
    <property type="entry name" value="Ig-like_dom"/>
</dbReference>
<dbReference type="InterPro" id="IPR036179">
    <property type="entry name" value="Ig-like_dom_sf"/>
</dbReference>
<dbReference type="InterPro" id="IPR013783">
    <property type="entry name" value="Ig-like_fold"/>
</dbReference>
<dbReference type="InterPro" id="IPR003599">
    <property type="entry name" value="Ig_sub"/>
</dbReference>
<dbReference type="InterPro" id="IPR013106">
    <property type="entry name" value="Ig_V-set"/>
</dbReference>
<dbReference type="InterPro" id="IPR050150">
    <property type="entry name" value="IgV_Light_Chain"/>
</dbReference>
<dbReference type="PANTHER" id="PTHR23267">
    <property type="entry name" value="IMMUNOGLOBULIN LIGHT CHAIN"/>
    <property type="match status" value="1"/>
</dbReference>
<dbReference type="Pfam" id="PF07686">
    <property type="entry name" value="V-set"/>
    <property type="match status" value="1"/>
</dbReference>
<dbReference type="SMART" id="SM00409">
    <property type="entry name" value="IG"/>
    <property type="match status" value="1"/>
</dbReference>
<dbReference type="SMART" id="SM00406">
    <property type="entry name" value="IGv"/>
    <property type="match status" value="1"/>
</dbReference>
<dbReference type="SUPFAM" id="SSF48726">
    <property type="entry name" value="Immunoglobulin"/>
    <property type="match status" value="1"/>
</dbReference>
<dbReference type="PROSITE" id="PS50835">
    <property type="entry name" value="IG_LIKE"/>
    <property type="match status" value="1"/>
</dbReference>
<reference key="1">
    <citation type="journal article" date="1978" name="Biochemistry">
        <title>Kappa chain variable regions from three galactan binding myeloma proteins.</title>
        <authorList>
            <person name="Rao D.N."/>
            <person name="Rudikoff S."/>
            <person name="Potter M."/>
        </authorList>
    </citation>
    <scope>PROTEIN SEQUENCE</scope>
</reference>
<reference key="2">
    <citation type="journal article" date="1980" name="Proc. Natl. Acad. Sci. U.S.A.">
        <title>Kappa chain joining segments and structural diversity of antibody combining sites.</title>
        <authorList>
            <person name="Rudikoff S."/>
            <person name="Rao D.N."/>
            <person name="Glaudemans C.P.J."/>
            <person name="Potter M."/>
        </authorList>
    </citation>
    <scope>PROTEIN SEQUENCE</scope>
</reference>
<name>KV6A1_MOUSE</name>
<comment type="miscellaneous">
    <text>This chain was isolated from a myeloma protein that bind galactan.</text>
</comment>